<sequence length="179" mass="19203">MTFEDDLQASVRTIPDYPKPGVMFRDITTLLGDARAFRRAVDQLVHPWAGSKIDKVAGIEARGFILGGAVAHQLSAGFVPIRKKGKLPHQTVRMAYALEYGTDEMEMHVDAIAKGERVILVDDLIATGGTAEGAVKLLRQIGADVVAACFIIDLPDLGGAAKLHAMDVPVRTLMAFGGH</sequence>
<dbReference type="EC" id="2.4.2.7" evidence="1"/>
<dbReference type="EMBL" id="CP000319">
    <property type="protein sequence ID" value="ABE63972.1"/>
    <property type="molecule type" value="Genomic_DNA"/>
</dbReference>
<dbReference type="RefSeq" id="WP_011511628.1">
    <property type="nucleotide sequence ID" value="NC_007964.1"/>
</dbReference>
<dbReference type="SMR" id="Q1QIH5"/>
<dbReference type="STRING" id="323097.Nham_3237"/>
<dbReference type="KEGG" id="nha:Nham_3237"/>
<dbReference type="eggNOG" id="COG0503">
    <property type="taxonomic scope" value="Bacteria"/>
</dbReference>
<dbReference type="HOGENOM" id="CLU_063339_3_0_5"/>
<dbReference type="OrthoDB" id="9803963at2"/>
<dbReference type="UniPathway" id="UPA00588">
    <property type="reaction ID" value="UER00646"/>
</dbReference>
<dbReference type="Proteomes" id="UP000001953">
    <property type="component" value="Chromosome"/>
</dbReference>
<dbReference type="GO" id="GO:0005737">
    <property type="term" value="C:cytoplasm"/>
    <property type="evidence" value="ECO:0007669"/>
    <property type="project" value="UniProtKB-SubCell"/>
</dbReference>
<dbReference type="GO" id="GO:0002055">
    <property type="term" value="F:adenine binding"/>
    <property type="evidence" value="ECO:0007669"/>
    <property type="project" value="TreeGrafter"/>
</dbReference>
<dbReference type="GO" id="GO:0003999">
    <property type="term" value="F:adenine phosphoribosyltransferase activity"/>
    <property type="evidence" value="ECO:0007669"/>
    <property type="project" value="UniProtKB-UniRule"/>
</dbReference>
<dbReference type="GO" id="GO:0016208">
    <property type="term" value="F:AMP binding"/>
    <property type="evidence" value="ECO:0007669"/>
    <property type="project" value="TreeGrafter"/>
</dbReference>
<dbReference type="GO" id="GO:0006168">
    <property type="term" value="P:adenine salvage"/>
    <property type="evidence" value="ECO:0007669"/>
    <property type="project" value="InterPro"/>
</dbReference>
<dbReference type="GO" id="GO:0044209">
    <property type="term" value="P:AMP salvage"/>
    <property type="evidence" value="ECO:0007669"/>
    <property type="project" value="UniProtKB-UniRule"/>
</dbReference>
<dbReference type="GO" id="GO:0006166">
    <property type="term" value="P:purine ribonucleoside salvage"/>
    <property type="evidence" value="ECO:0007669"/>
    <property type="project" value="UniProtKB-KW"/>
</dbReference>
<dbReference type="CDD" id="cd06223">
    <property type="entry name" value="PRTases_typeI"/>
    <property type="match status" value="1"/>
</dbReference>
<dbReference type="FunFam" id="3.40.50.2020:FF:000021">
    <property type="entry name" value="Adenine phosphoribosyltransferase"/>
    <property type="match status" value="1"/>
</dbReference>
<dbReference type="Gene3D" id="3.40.50.2020">
    <property type="match status" value="1"/>
</dbReference>
<dbReference type="HAMAP" id="MF_00004">
    <property type="entry name" value="Aden_phosphoribosyltr"/>
    <property type="match status" value="1"/>
</dbReference>
<dbReference type="InterPro" id="IPR005764">
    <property type="entry name" value="Ade_phspho_trans"/>
</dbReference>
<dbReference type="InterPro" id="IPR000836">
    <property type="entry name" value="PRibTrfase_dom"/>
</dbReference>
<dbReference type="InterPro" id="IPR029057">
    <property type="entry name" value="PRTase-like"/>
</dbReference>
<dbReference type="InterPro" id="IPR050054">
    <property type="entry name" value="UPRTase/APRTase"/>
</dbReference>
<dbReference type="NCBIfam" id="TIGR01090">
    <property type="entry name" value="apt"/>
    <property type="match status" value="1"/>
</dbReference>
<dbReference type="NCBIfam" id="NF002634">
    <property type="entry name" value="PRK02304.1-3"/>
    <property type="match status" value="1"/>
</dbReference>
<dbReference type="NCBIfam" id="NF002636">
    <property type="entry name" value="PRK02304.1-5"/>
    <property type="match status" value="1"/>
</dbReference>
<dbReference type="PANTHER" id="PTHR32315">
    <property type="entry name" value="ADENINE PHOSPHORIBOSYLTRANSFERASE"/>
    <property type="match status" value="1"/>
</dbReference>
<dbReference type="PANTHER" id="PTHR32315:SF3">
    <property type="entry name" value="ADENINE PHOSPHORIBOSYLTRANSFERASE"/>
    <property type="match status" value="1"/>
</dbReference>
<dbReference type="Pfam" id="PF00156">
    <property type="entry name" value="Pribosyltran"/>
    <property type="match status" value="1"/>
</dbReference>
<dbReference type="SUPFAM" id="SSF53271">
    <property type="entry name" value="PRTase-like"/>
    <property type="match status" value="1"/>
</dbReference>
<dbReference type="PROSITE" id="PS00103">
    <property type="entry name" value="PUR_PYR_PR_TRANSFER"/>
    <property type="match status" value="1"/>
</dbReference>
<feature type="chain" id="PRO_1000000313" description="Adenine phosphoribosyltransferase">
    <location>
        <begin position="1"/>
        <end position="179"/>
    </location>
</feature>
<reference key="1">
    <citation type="submission" date="2006-03" db="EMBL/GenBank/DDBJ databases">
        <title>Complete sequence of chromosome of Nitrobacter hamburgensis X14.</title>
        <authorList>
            <consortium name="US DOE Joint Genome Institute"/>
            <person name="Copeland A."/>
            <person name="Lucas S."/>
            <person name="Lapidus A."/>
            <person name="Barry K."/>
            <person name="Detter J.C."/>
            <person name="Glavina del Rio T."/>
            <person name="Hammon N."/>
            <person name="Israni S."/>
            <person name="Dalin E."/>
            <person name="Tice H."/>
            <person name="Pitluck S."/>
            <person name="Chain P."/>
            <person name="Malfatti S."/>
            <person name="Shin M."/>
            <person name="Vergez L."/>
            <person name="Schmutz J."/>
            <person name="Larimer F."/>
            <person name="Land M."/>
            <person name="Hauser L."/>
            <person name="Kyrpides N."/>
            <person name="Ivanova N."/>
            <person name="Ward B."/>
            <person name="Arp D."/>
            <person name="Klotz M."/>
            <person name="Stein L."/>
            <person name="O'Mullan G."/>
            <person name="Starkenburg S."/>
            <person name="Sayavedra L."/>
            <person name="Poret-Peterson A.T."/>
            <person name="Gentry M.E."/>
            <person name="Bruce D."/>
            <person name="Richardson P."/>
        </authorList>
    </citation>
    <scope>NUCLEOTIDE SEQUENCE [LARGE SCALE GENOMIC DNA]</scope>
    <source>
        <strain>DSM 10229 / NCIMB 13809 / X14</strain>
    </source>
</reference>
<evidence type="ECO:0000255" key="1">
    <source>
        <dbReference type="HAMAP-Rule" id="MF_00004"/>
    </source>
</evidence>
<comment type="function">
    <text evidence="1">Catalyzes a salvage reaction resulting in the formation of AMP, that is energically less costly than de novo synthesis.</text>
</comment>
<comment type="catalytic activity">
    <reaction evidence="1">
        <text>AMP + diphosphate = 5-phospho-alpha-D-ribose 1-diphosphate + adenine</text>
        <dbReference type="Rhea" id="RHEA:16609"/>
        <dbReference type="ChEBI" id="CHEBI:16708"/>
        <dbReference type="ChEBI" id="CHEBI:33019"/>
        <dbReference type="ChEBI" id="CHEBI:58017"/>
        <dbReference type="ChEBI" id="CHEBI:456215"/>
        <dbReference type="EC" id="2.4.2.7"/>
    </reaction>
</comment>
<comment type="pathway">
    <text evidence="1">Purine metabolism; AMP biosynthesis via salvage pathway; AMP from adenine: step 1/1.</text>
</comment>
<comment type="subunit">
    <text evidence="1">Homodimer.</text>
</comment>
<comment type="subcellular location">
    <subcellularLocation>
        <location evidence="1">Cytoplasm</location>
    </subcellularLocation>
</comment>
<comment type="similarity">
    <text evidence="1">Belongs to the purine/pyrimidine phosphoribosyltransferase family.</text>
</comment>
<proteinExistence type="inferred from homology"/>
<accession>Q1QIH5</accession>
<name>APT_NITHX</name>
<gene>
    <name evidence="1" type="primary">apt</name>
    <name type="ordered locus">Nham_3237</name>
</gene>
<organism>
    <name type="scientific">Nitrobacter hamburgensis (strain DSM 10229 / NCIMB 13809 / X14)</name>
    <dbReference type="NCBI Taxonomy" id="323097"/>
    <lineage>
        <taxon>Bacteria</taxon>
        <taxon>Pseudomonadati</taxon>
        <taxon>Pseudomonadota</taxon>
        <taxon>Alphaproteobacteria</taxon>
        <taxon>Hyphomicrobiales</taxon>
        <taxon>Nitrobacteraceae</taxon>
        <taxon>Nitrobacter</taxon>
    </lineage>
</organism>
<protein>
    <recommendedName>
        <fullName evidence="1">Adenine phosphoribosyltransferase</fullName>
        <shortName evidence="1">APRT</shortName>
        <ecNumber evidence="1">2.4.2.7</ecNumber>
    </recommendedName>
</protein>
<keyword id="KW-0963">Cytoplasm</keyword>
<keyword id="KW-0328">Glycosyltransferase</keyword>
<keyword id="KW-0660">Purine salvage</keyword>
<keyword id="KW-1185">Reference proteome</keyword>
<keyword id="KW-0808">Transferase</keyword>